<protein>
    <recommendedName>
        <fullName evidence="9">ESCRT-related protein CHMP1B</fullName>
    </recommendedName>
    <alternativeName>
        <fullName evidence="8">Protein CHARGED MULTIVESICULAR BODY PROTEIN 1B</fullName>
    </alternativeName>
    <alternativeName>
        <fullName evidence="8">Protein CHROMATIN MODIFYING PROTEIN 1B</fullName>
    </alternativeName>
    <alternativeName>
        <fullName evidence="12">Vacuolar protein-sorting-associated protein 46.2</fullName>
    </alternativeName>
</protein>
<sequence length="203" mass="22691">MGNTDKLMNQIFDLKFTSKSLQRQSRKCEKEEKAEKLKVKKAIEKGNMDGARIYAENAIRKRSEQMNYLRLASRLDAVVARLDTQAKMTTITKSMTNIVKSLESSLATGNLQKMSETMDSFEKQFVNMEVQAEFMENAMAGSTSLSTPEGEVNSLMQQVADDYGLEVSVGLPQPAGHAIPTKTEEKVDEDDLSRRLAELKARG</sequence>
<evidence type="ECO:0000250" key="1">
    <source>
        <dbReference type="UniProtKB" id="Q9HD42"/>
    </source>
</evidence>
<evidence type="ECO:0000255" key="2"/>
<evidence type="ECO:0000256" key="3">
    <source>
        <dbReference type="SAM" id="MobiDB-lite"/>
    </source>
</evidence>
<evidence type="ECO:0000269" key="4">
    <source>
    </source>
</evidence>
<evidence type="ECO:0000269" key="5">
    <source>
    </source>
</evidence>
<evidence type="ECO:0000269" key="6">
    <source>
    </source>
</evidence>
<evidence type="ECO:0000269" key="7">
    <source>
    </source>
</evidence>
<evidence type="ECO:0000303" key="8">
    <source>
    </source>
</evidence>
<evidence type="ECO:0000305" key="9"/>
<evidence type="ECO:0000312" key="10">
    <source>
        <dbReference type="Araport" id="AT1G73030"/>
    </source>
</evidence>
<evidence type="ECO:0000312" key="11">
    <source>
        <dbReference type="EMBL" id="AAD55650.1"/>
    </source>
</evidence>
<evidence type="ECO:0000312" key="12">
    <source>
        <dbReference type="EMBL" id="AEE35406.1"/>
    </source>
</evidence>
<name>CHM1B_ARATH</name>
<proteinExistence type="evidence at protein level"/>
<comment type="function">
    <text evidence="4 7">Involved in ESCRT-dependent multivesicular body (MVB) formation and sorting of endosomal cargo proteins into MVBs. Mediates the MVB sorting of the auxin carriers PIN1, PIN2 and AUX1. Required for embryonic axis establishment and seedling growth (PubMed:19304934). Required for autophagic degradation of plastid proteins. Promotes the efficient sequestration of cargo from plastids into autophagosomes. Mediates the efficient delivery of autophagic plastid bodies to the vacuole, but not into the cytoplasm (PubMed:25649438).</text>
</comment>
<comment type="subunit">
    <text evidence="5 6">Interacts with CHMP1A and LIP5 (PubMed:20663085). Interacts with VPS2.2 (PubMed:22010978).</text>
</comment>
<comment type="subcellular location">
    <subcellularLocation>
        <location evidence="1">Cytoplasm</location>
    </subcellularLocation>
    <subcellularLocation>
        <location evidence="1">Endosome membrane</location>
        <topology evidence="1">Peripheral membrane protein</topology>
    </subcellularLocation>
</comment>
<comment type="disruption phenotype">
    <text evidence="4">No visible phenotype under normal growth conditions, but double mutants chmp1a and chmp1b show embryo development defect.</text>
</comment>
<comment type="similarity">
    <text evidence="9">Belongs to the SNF7 family.</text>
</comment>
<feature type="chain" id="PRO_0000433027" description="ESCRT-related protein CHMP1B">
    <location>
        <begin position="1"/>
        <end position="203"/>
    </location>
</feature>
<feature type="region of interest" description="Disordered" evidence="3">
    <location>
        <begin position="172"/>
        <end position="203"/>
    </location>
</feature>
<feature type="coiled-coil region" evidence="2">
    <location>
        <begin position="13"/>
        <end position="51"/>
    </location>
</feature>
<feature type="coiled-coil region" evidence="2">
    <location>
        <begin position="109"/>
        <end position="140"/>
    </location>
</feature>
<feature type="compositionally biased region" description="Basic and acidic residues" evidence="3">
    <location>
        <begin position="192"/>
        <end position="203"/>
    </location>
</feature>
<feature type="sequence conflict" description="In Ref. 4; AAM61431." evidence="9" ref="4">
    <original>S</original>
    <variation>R</variation>
    <location>
        <position position="63"/>
    </location>
</feature>
<dbReference type="EMBL" id="AC008017">
    <property type="protein sequence ID" value="AAD55650.1"/>
    <property type="molecule type" value="Genomic_DNA"/>
</dbReference>
<dbReference type="EMBL" id="CP002684">
    <property type="protein sequence ID" value="AEE35406.1"/>
    <property type="molecule type" value="Genomic_DNA"/>
</dbReference>
<dbReference type="EMBL" id="AY059851">
    <property type="protein sequence ID" value="AAL24333.1"/>
    <property type="molecule type" value="mRNA"/>
</dbReference>
<dbReference type="EMBL" id="AY081673">
    <property type="protein sequence ID" value="AAM10235.1"/>
    <property type="molecule type" value="mRNA"/>
</dbReference>
<dbReference type="EMBL" id="AY084868">
    <property type="protein sequence ID" value="AAM61431.1"/>
    <property type="molecule type" value="mRNA"/>
</dbReference>
<dbReference type="PIR" id="G96755">
    <property type="entry name" value="G96755"/>
</dbReference>
<dbReference type="RefSeq" id="NP_565053.1">
    <property type="nucleotide sequence ID" value="NM_105961.3"/>
</dbReference>
<dbReference type="SMR" id="Q9SSM4"/>
<dbReference type="FunCoup" id="Q9SSM4">
    <property type="interactions" value="4254"/>
</dbReference>
<dbReference type="IntAct" id="Q9SSM4">
    <property type="interactions" value="3"/>
</dbReference>
<dbReference type="STRING" id="3702.Q9SSM4"/>
<dbReference type="TCDB" id="3.A.31.1.2">
    <property type="family name" value="the endosomal sorting complexes required for transport iii (escrt-iii) family"/>
</dbReference>
<dbReference type="iPTMnet" id="Q9SSM4"/>
<dbReference type="PaxDb" id="3702-AT1G73030.1"/>
<dbReference type="ProteomicsDB" id="241028"/>
<dbReference type="EnsemblPlants" id="AT1G73030.1">
    <property type="protein sequence ID" value="AT1G73030.1"/>
    <property type="gene ID" value="AT1G73030"/>
</dbReference>
<dbReference type="GeneID" id="843634"/>
<dbReference type="Gramene" id="AT1G73030.1">
    <property type="protein sequence ID" value="AT1G73030.1"/>
    <property type="gene ID" value="AT1G73030"/>
</dbReference>
<dbReference type="KEGG" id="ath:AT1G73030"/>
<dbReference type="Araport" id="AT1G73030"/>
<dbReference type="TAIR" id="AT1G73030">
    <property type="gene designation" value="VPS46.2"/>
</dbReference>
<dbReference type="eggNOG" id="KOG3232">
    <property type="taxonomic scope" value="Eukaryota"/>
</dbReference>
<dbReference type="HOGENOM" id="CLU_080826_0_1_1"/>
<dbReference type="InParanoid" id="Q9SSM4"/>
<dbReference type="OMA" id="QQITMVM"/>
<dbReference type="OrthoDB" id="10266568at2759"/>
<dbReference type="PhylomeDB" id="Q9SSM4"/>
<dbReference type="CD-CODE" id="4299E36E">
    <property type="entry name" value="Nucleolus"/>
</dbReference>
<dbReference type="PRO" id="PR:Q9SSM4"/>
<dbReference type="Proteomes" id="UP000006548">
    <property type="component" value="Chromosome 1"/>
</dbReference>
<dbReference type="ExpressionAtlas" id="Q9SSM4">
    <property type="expression patterns" value="baseline and differential"/>
</dbReference>
<dbReference type="GO" id="GO:0010008">
    <property type="term" value="C:endosome membrane"/>
    <property type="evidence" value="ECO:0007669"/>
    <property type="project" value="UniProtKB-SubCell"/>
</dbReference>
<dbReference type="GO" id="GO:0005739">
    <property type="term" value="C:mitochondrion"/>
    <property type="evidence" value="ECO:0007005"/>
    <property type="project" value="TAIR"/>
</dbReference>
<dbReference type="GO" id="GO:0009793">
    <property type="term" value="P:embryo development ending in seed dormancy"/>
    <property type="evidence" value="ECO:0000316"/>
    <property type="project" value="TAIR"/>
</dbReference>
<dbReference type="GO" id="GO:0000578">
    <property type="term" value="P:embryonic axis specification"/>
    <property type="evidence" value="ECO:0000316"/>
    <property type="project" value="TAIR"/>
</dbReference>
<dbReference type="GO" id="GO:0032509">
    <property type="term" value="P:endosome transport via multivesicular body sorting pathway"/>
    <property type="evidence" value="ECO:0000316"/>
    <property type="project" value="TAIR"/>
</dbReference>
<dbReference type="GO" id="GO:0015031">
    <property type="term" value="P:protein transport"/>
    <property type="evidence" value="ECO:0007669"/>
    <property type="project" value="UniProtKB-KW"/>
</dbReference>
<dbReference type="GO" id="GO:0090351">
    <property type="term" value="P:seedling development"/>
    <property type="evidence" value="ECO:0000316"/>
    <property type="project" value="TAIR"/>
</dbReference>
<dbReference type="GO" id="GO:0007034">
    <property type="term" value="P:vacuolar transport"/>
    <property type="evidence" value="ECO:0007669"/>
    <property type="project" value="InterPro"/>
</dbReference>
<dbReference type="Gene3D" id="6.10.140.1230">
    <property type="match status" value="1"/>
</dbReference>
<dbReference type="InterPro" id="IPR005024">
    <property type="entry name" value="Snf7_fam"/>
</dbReference>
<dbReference type="PANTHER" id="PTHR10476">
    <property type="entry name" value="CHARGED MULTIVESICULAR BODY PROTEIN"/>
    <property type="match status" value="1"/>
</dbReference>
<dbReference type="Pfam" id="PF03357">
    <property type="entry name" value="Snf7"/>
    <property type="match status" value="1"/>
</dbReference>
<reference key="1">
    <citation type="journal article" date="2000" name="Nature">
        <title>Sequence and analysis of chromosome 1 of the plant Arabidopsis thaliana.</title>
        <authorList>
            <person name="Theologis A."/>
            <person name="Ecker J.R."/>
            <person name="Palm C.J."/>
            <person name="Federspiel N.A."/>
            <person name="Kaul S."/>
            <person name="White O."/>
            <person name="Alonso J."/>
            <person name="Altafi H."/>
            <person name="Araujo R."/>
            <person name="Bowman C.L."/>
            <person name="Brooks S.Y."/>
            <person name="Buehler E."/>
            <person name="Chan A."/>
            <person name="Chao Q."/>
            <person name="Chen H."/>
            <person name="Cheuk R.F."/>
            <person name="Chin C.W."/>
            <person name="Chung M.K."/>
            <person name="Conn L."/>
            <person name="Conway A.B."/>
            <person name="Conway A.R."/>
            <person name="Creasy T.H."/>
            <person name="Dewar K."/>
            <person name="Dunn P."/>
            <person name="Etgu P."/>
            <person name="Feldblyum T.V."/>
            <person name="Feng J.-D."/>
            <person name="Fong B."/>
            <person name="Fujii C.Y."/>
            <person name="Gill J.E."/>
            <person name="Goldsmith A.D."/>
            <person name="Haas B."/>
            <person name="Hansen N.F."/>
            <person name="Hughes B."/>
            <person name="Huizar L."/>
            <person name="Hunter J.L."/>
            <person name="Jenkins J."/>
            <person name="Johnson-Hopson C."/>
            <person name="Khan S."/>
            <person name="Khaykin E."/>
            <person name="Kim C.J."/>
            <person name="Koo H.L."/>
            <person name="Kremenetskaia I."/>
            <person name="Kurtz D.B."/>
            <person name="Kwan A."/>
            <person name="Lam B."/>
            <person name="Langin-Hooper S."/>
            <person name="Lee A."/>
            <person name="Lee J.M."/>
            <person name="Lenz C.A."/>
            <person name="Li J.H."/>
            <person name="Li Y.-P."/>
            <person name="Lin X."/>
            <person name="Liu S.X."/>
            <person name="Liu Z.A."/>
            <person name="Luros J.S."/>
            <person name="Maiti R."/>
            <person name="Marziali A."/>
            <person name="Militscher J."/>
            <person name="Miranda M."/>
            <person name="Nguyen M."/>
            <person name="Nierman W.C."/>
            <person name="Osborne B.I."/>
            <person name="Pai G."/>
            <person name="Peterson J."/>
            <person name="Pham P.K."/>
            <person name="Rizzo M."/>
            <person name="Rooney T."/>
            <person name="Rowley D."/>
            <person name="Sakano H."/>
            <person name="Salzberg S.L."/>
            <person name="Schwartz J.R."/>
            <person name="Shinn P."/>
            <person name="Southwick A.M."/>
            <person name="Sun H."/>
            <person name="Tallon L.J."/>
            <person name="Tambunga G."/>
            <person name="Toriumi M.J."/>
            <person name="Town C.D."/>
            <person name="Utterback T."/>
            <person name="Van Aken S."/>
            <person name="Vaysberg M."/>
            <person name="Vysotskaia V.S."/>
            <person name="Walker M."/>
            <person name="Wu D."/>
            <person name="Yu G."/>
            <person name="Fraser C.M."/>
            <person name="Venter J.C."/>
            <person name="Davis R.W."/>
        </authorList>
    </citation>
    <scope>NUCLEOTIDE SEQUENCE [LARGE SCALE GENOMIC DNA]</scope>
    <source>
        <strain>cv. Columbia</strain>
    </source>
</reference>
<reference key="2">
    <citation type="journal article" date="2017" name="Plant J.">
        <title>Araport11: a complete reannotation of the Arabidopsis thaliana reference genome.</title>
        <authorList>
            <person name="Cheng C.Y."/>
            <person name="Krishnakumar V."/>
            <person name="Chan A.P."/>
            <person name="Thibaud-Nissen F."/>
            <person name="Schobel S."/>
            <person name="Town C.D."/>
        </authorList>
    </citation>
    <scope>GENOME REANNOTATION</scope>
    <source>
        <strain>cv. Columbia</strain>
    </source>
</reference>
<reference key="3">
    <citation type="journal article" date="2003" name="Science">
        <title>Empirical analysis of transcriptional activity in the Arabidopsis genome.</title>
        <authorList>
            <person name="Yamada K."/>
            <person name="Lim J."/>
            <person name="Dale J.M."/>
            <person name="Chen H."/>
            <person name="Shinn P."/>
            <person name="Palm C.J."/>
            <person name="Southwick A.M."/>
            <person name="Wu H.C."/>
            <person name="Kim C.J."/>
            <person name="Nguyen M."/>
            <person name="Pham P.K."/>
            <person name="Cheuk R.F."/>
            <person name="Karlin-Newmann G."/>
            <person name="Liu S.X."/>
            <person name="Lam B."/>
            <person name="Sakano H."/>
            <person name="Wu T."/>
            <person name="Yu G."/>
            <person name="Miranda M."/>
            <person name="Quach H.L."/>
            <person name="Tripp M."/>
            <person name="Chang C.H."/>
            <person name="Lee J.M."/>
            <person name="Toriumi M.J."/>
            <person name="Chan M.M."/>
            <person name="Tang C.C."/>
            <person name="Onodera C.S."/>
            <person name="Deng J.M."/>
            <person name="Akiyama K."/>
            <person name="Ansari Y."/>
            <person name="Arakawa T."/>
            <person name="Banh J."/>
            <person name="Banno F."/>
            <person name="Bowser L."/>
            <person name="Brooks S.Y."/>
            <person name="Carninci P."/>
            <person name="Chao Q."/>
            <person name="Choy N."/>
            <person name="Enju A."/>
            <person name="Goldsmith A.D."/>
            <person name="Gurjal M."/>
            <person name="Hansen N.F."/>
            <person name="Hayashizaki Y."/>
            <person name="Johnson-Hopson C."/>
            <person name="Hsuan V.W."/>
            <person name="Iida K."/>
            <person name="Karnes M."/>
            <person name="Khan S."/>
            <person name="Koesema E."/>
            <person name="Ishida J."/>
            <person name="Jiang P.X."/>
            <person name="Jones T."/>
            <person name="Kawai J."/>
            <person name="Kamiya A."/>
            <person name="Meyers C."/>
            <person name="Nakajima M."/>
            <person name="Narusaka M."/>
            <person name="Seki M."/>
            <person name="Sakurai T."/>
            <person name="Satou M."/>
            <person name="Tamse R."/>
            <person name="Vaysberg M."/>
            <person name="Wallender E.K."/>
            <person name="Wong C."/>
            <person name="Yamamura Y."/>
            <person name="Yuan S."/>
            <person name="Shinozaki K."/>
            <person name="Davis R.W."/>
            <person name="Theologis A."/>
            <person name="Ecker J.R."/>
        </authorList>
    </citation>
    <scope>NUCLEOTIDE SEQUENCE [LARGE SCALE MRNA]</scope>
    <source>
        <strain>cv. Columbia</strain>
    </source>
</reference>
<reference key="4">
    <citation type="submission" date="2002-03" db="EMBL/GenBank/DDBJ databases">
        <title>Full-length cDNA from Arabidopsis thaliana.</title>
        <authorList>
            <person name="Brover V.V."/>
            <person name="Troukhan M.E."/>
            <person name="Alexandrov N.A."/>
            <person name="Lu Y.-P."/>
            <person name="Flavell R.B."/>
            <person name="Feldmann K.A."/>
        </authorList>
    </citation>
    <scope>NUCLEOTIDE SEQUENCE [LARGE SCALE MRNA]</scope>
</reference>
<reference key="5">
    <citation type="journal article" date="2009" name="Plant Cell">
        <title>The ESCRT-related CHMP1A and B proteins mediate multivesicular body sorting of auxin carriers in Arabidopsis and are required for plant development.</title>
        <authorList>
            <person name="Spitzer C."/>
            <person name="Reyes F.C."/>
            <person name="Buono R."/>
            <person name="Sliwinski M.K."/>
            <person name="Haas T.J."/>
            <person name="Otegui M.S."/>
        </authorList>
    </citation>
    <scope>FUNCTION</scope>
    <scope>DISRUPTION PHENOTYPE</scope>
</reference>
<reference key="6">
    <citation type="journal article" date="2010" name="Plant J.">
        <title>The AAA-type ATPase AtSKD1 contributes to vacuolar maintenance of Arabidopsis thaliana.</title>
        <authorList>
            <person name="Shahriari M."/>
            <person name="Keshavaiah C."/>
            <person name="Scheuring D."/>
            <person name="Sabovljevic A."/>
            <person name="Pimpl P."/>
            <person name="Haeusler R.E."/>
            <person name="Huelskamp M."/>
            <person name="Schellmann S."/>
        </authorList>
    </citation>
    <scope>INTERACTION WITH CHMP1A AND LIP5</scope>
    <source>
        <strain>cv. Columbia</strain>
    </source>
</reference>
<reference key="7">
    <citation type="journal article" date="2012" name="J. Proteome Res.">
        <title>Interactome of the plant-specific ESCRT-III component AtVPS2.2 in Arabidopsis thaliana.</title>
        <authorList>
            <person name="Ibl V."/>
            <person name="Csaszar E."/>
            <person name="Schlager N."/>
            <person name="Neubert S."/>
            <person name="Spitzer C."/>
            <person name="Hauser M.T."/>
        </authorList>
    </citation>
    <scope>INTERACTION WITH VPS2.2</scope>
</reference>
<reference key="8">
    <citation type="journal article" date="2015" name="Plant Cell">
        <title>The endosomal protein CHARGED MULTIVESICULAR BODY PROTEIN1 regulates the autophagic turnover of plastids in Arabidopsis.</title>
        <authorList>
            <person name="Spitzer C."/>
            <person name="Li F."/>
            <person name="Buono R."/>
            <person name="Roschzttardtz H."/>
            <person name="Chung T."/>
            <person name="Zhang M."/>
            <person name="Osteryoung K.W."/>
            <person name="Vierstra R.D."/>
            <person name="Otegui M.S."/>
        </authorList>
    </citation>
    <scope>FUNCTION</scope>
</reference>
<keyword id="KW-0175">Coiled coil</keyword>
<keyword id="KW-0963">Cytoplasm</keyword>
<keyword id="KW-0967">Endosome</keyword>
<keyword id="KW-0472">Membrane</keyword>
<keyword id="KW-0653">Protein transport</keyword>
<keyword id="KW-1185">Reference proteome</keyword>
<keyword id="KW-0813">Transport</keyword>
<organism>
    <name type="scientific">Arabidopsis thaliana</name>
    <name type="common">Mouse-ear cress</name>
    <dbReference type="NCBI Taxonomy" id="3702"/>
    <lineage>
        <taxon>Eukaryota</taxon>
        <taxon>Viridiplantae</taxon>
        <taxon>Streptophyta</taxon>
        <taxon>Embryophyta</taxon>
        <taxon>Tracheophyta</taxon>
        <taxon>Spermatophyta</taxon>
        <taxon>Magnoliopsida</taxon>
        <taxon>eudicotyledons</taxon>
        <taxon>Gunneridae</taxon>
        <taxon>Pentapetalae</taxon>
        <taxon>rosids</taxon>
        <taxon>malvids</taxon>
        <taxon>Brassicales</taxon>
        <taxon>Brassicaceae</taxon>
        <taxon>Camelineae</taxon>
        <taxon>Arabidopsis</taxon>
    </lineage>
</organism>
<gene>
    <name evidence="8" type="primary">CHMP1B</name>
    <name evidence="12" type="synonym">VPS46.2</name>
    <name evidence="10" type="ordered locus">At1g73030</name>
    <name evidence="11" type="ORF">F3N23.23</name>
</gene>
<accession>Q9SSM4</accession>
<accession>Q8LFG3</accession>